<keyword id="KW-0997">Cell inner membrane</keyword>
<keyword id="KW-1003">Cell membrane</keyword>
<keyword id="KW-0472">Membrane</keyword>
<keyword id="KW-0520">NAD</keyword>
<keyword id="KW-0874">Quinone</keyword>
<keyword id="KW-1278">Translocase</keyword>
<keyword id="KW-0813">Transport</keyword>
<keyword id="KW-0830">Ubiquinone</keyword>
<reference key="1">
    <citation type="journal article" date="2013" name="Proc. Natl. Acad. Sci. U.S.A.">
        <title>Polynucleobacter necessarius, a model for genome reduction in both free-living and symbiotic bacteria.</title>
        <authorList>
            <person name="Boscaro V."/>
            <person name="Felletti M."/>
            <person name="Vannini C."/>
            <person name="Ackerman M.S."/>
            <person name="Chain P.S."/>
            <person name="Malfatti S."/>
            <person name="Vergez L.M."/>
            <person name="Shin M."/>
            <person name="Doak T.G."/>
            <person name="Lynch M."/>
            <person name="Petroni G."/>
        </authorList>
    </citation>
    <scope>NUCLEOTIDE SEQUENCE [LARGE SCALE GENOMIC DNA]</scope>
    <source>
        <strain>STIR1</strain>
    </source>
</reference>
<accession>B1XUK0</accession>
<evidence type="ECO:0000255" key="1">
    <source>
        <dbReference type="HAMAP-Rule" id="MF_01357"/>
    </source>
</evidence>
<name>NUOC_POLNS</name>
<protein>
    <recommendedName>
        <fullName evidence="1">NADH-quinone oxidoreductase subunit C</fullName>
        <ecNumber evidence="1">7.1.1.-</ecNumber>
    </recommendedName>
    <alternativeName>
        <fullName evidence="1">NADH dehydrogenase I subunit C</fullName>
    </alternativeName>
    <alternativeName>
        <fullName evidence="1">NDH-1 subunit C</fullName>
    </alternativeName>
</protein>
<sequence length="199" mass="22931">MSERLIQLAANLKKVLGKRIQSVEIALGEVTVVVYADTYFESAMLMRDDPSLAFEQLIDLCGVDYQDFRDGAWAGQRFGVVSHLLSLEHNWRLRVRVFAPDDSYPLVASVSPVWNSANWFEREAFDLYGILFDGHDDLRRILTDYGFIGHPFRKDFPISGNVEMRYDPELKRVIYQPVTIEAREITPRIVREEQYGGPV</sequence>
<dbReference type="EC" id="7.1.1.-" evidence="1"/>
<dbReference type="EMBL" id="CP001010">
    <property type="protein sequence ID" value="ACB44027.1"/>
    <property type="molecule type" value="Genomic_DNA"/>
</dbReference>
<dbReference type="SMR" id="B1XUK0"/>
<dbReference type="STRING" id="452638.Pnec_0823"/>
<dbReference type="KEGG" id="pne:Pnec_0823"/>
<dbReference type="eggNOG" id="COG0852">
    <property type="taxonomic scope" value="Bacteria"/>
</dbReference>
<dbReference type="HOGENOM" id="CLU_042628_2_1_4"/>
<dbReference type="OrthoDB" id="9803286at2"/>
<dbReference type="GO" id="GO:0005886">
    <property type="term" value="C:plasma membrane"/>
    <property type="evidence" value="ECO:0007669"/>
    <property type="project" value="UniProtKB-SubCell"/>
</dbReference>
<dbReference type="GO" id="GO:0008137">
    <property type="term" value="F:NADH dehydrogenase (ubiquinone) activity"/>
    <property type="evidence" value="ECO:0007669"/>
    <property type="project" value="InterPro"/>
</dbReference>
<dbReference type="GO" id="GO:0050136">
    <property type="term" value="F:NADH:ubiquinone reductase (non-electrogenic) activity"/>
    <property type="evidence" value="ECO:0007669"/>
    <property type="project" value="UniProtKB-UniRule"/>
</dbReference>
<dbReference type="GO" id="GO:0048038">
    <property type="term" value="F:quinone binding"/>
    <property type="evidence" value="ECO:0007669"/>
    <property type="project" value="UniProtKB-KW"/>
</dbReference>
<dbReference type="Gene3D" id="3.30.460.80">
    <property type="entry name" value="NADH:ubiquinone oxidoreductase, 30kDa subunit"/>
    <property type="match status" value="1"/>
</dbReference>
<dbReference type="HAMAP" id="MF_01357">
    <property type="entry name" value="NDH1_NuoC"/>
    <property type="match status" value="1"/>
</dbReference>
<dbReference type="InterPro" id="IPR010218">
    <property type="entry name" value="NADH_DH_suC"/>
</dbReference>
<dbReference type="InterPro" id="IPR037232">
    <property type="entry name" value="NADH_quin_OxRdtase_su_C/D-like"/>
</dbReference>
<dbReference type="InterPro" id="IPR001268">
    <property type="entry name" value="NADH_UbQ_OxRdtase_30kDa_su"/>
</dbReference>
<dbReference type="InterPro" id="IPR020396">
    <property type="entry name" value="NADH_UbQ_OxRdtase_CS"/>
</dbReference>
<dbReference type="NCBIfam" id="TIGR01961">
    <property type="entry name" value="NuoC_fam"/>
    <property type="match status" value="1"/>
</dbReference>
<dbReference type="NCBIfam" id="NF004730">
    <property type="entry name" value="PRK06074.1-1"/>
    <property type="match status" value="1"/>
</dbReference>
<dbReference type="PANTHER" id="PTHR10884:SF14">
    <property type="entry name" value="NADH DEHYDROGENASE [UBIQUINONE] IRON-SULFUR PROTEIN 3, MITOCHONDRIAL"/>
    <property type="match status" value="1"/>
</dbReference>
<dbReference type="PANTHER" id="PTHR10884">
    <property type="entry name" value="NADH DEHYDROGENASE UBIQUINONE IRON-SULFUR PROTEIN 3"/>
    <property type="match status" value="1"/>
</dbReference>
<dbReference type="Pfam" id="PF00329">
    <property type="entry name" value="Complex1_30kDa"/>
    <property type="match status" value="1"/>
</dbReference>
<dbReference type="SUPFAM" id="SSF143243">
    <property type="entry name" value="Nqo5-like"/>
    <property type="match status" value="1"/>
</dbReference>
<dbReference type="PROSITE" id="PS00542">
    <property type="entry name" value="COMPLEX1_30K"/>
    <property type="match status" value="1"/>
</dbReference>
<gene>
    <name evidence="1" type="primary">nuoC</name>
    <name type="ordered locus">Pnec_0823</name>
</gene>
<proteinExistence type="inferred from homology"/>
<feature type="chain" id="PRO_0000358162" description="NADH-quinone oxidoreductase subunit C">
    <location>
        <begin position="1"/>
        <end position="199"/>
    </location>
</feature>
<organism>
    <name type="scientific">Polynucleobacter necessarius subsp. necessarius (strain STIR1)</name>
    <dbReference type="NCBI Taxonomy" id="452638"/>
    <lineage>
        <taxon>Bacteria</taxon>
        <taxon>Pseudomonadati</taxon>
        <taxon>Pseudomonadota</taxon>
        <taxon>Betaproteobacteria</taxon>
        <taxon>Burkholderiales</taxon>
        <taxon>Burkholderiaceae</taxon>
        <taxon>Polynucleobacter</taxon>
    </lineage>
</organism>
<comment type="function">
    <text evidence="1">NDH-1 shuttles electrons from NADH, via FMN and iron-sulfur (Fe-S) centers, to quinones in the respiratory chain. The immediate electron acceptor for the enzyme in this species is believed to be ubiquinone. Couples the redox reaction to proton translocation (for every two electrons transferred, four hydrogen ions are translocated across the cytoplasmic membrane), and thus conserves the redox energy in a proton gradient.</text>
</comment>
<comment type="catalytic activity">
    <reaction evidence="1">
        <text>a quinone + NADH + 5 H(+)(in) = a quinol + NAD(+) + 4 H(+)(out)</text>
        <dbReference type="Rhea" id="RHEA:57888"/>
        <dbReference type="ChEBI" id="CHEBI:15378"/>
        <dbReference type="ChEBI" id="CHEBI:24646"/>
        <dbReference type="ChEBI" id="CHEBI:57540"/>
        <dbReference type="ChEBI" id="CHEBI:57945"/>
        <dbReference type="ChEBI" id="CHEBI:132124"/>
    </reaction>
</comment>
<comment type="subunit">
    <text evidence="1">NDH-1 is composed of 14 different subunits. Subunits NuoB, C, D, E, F, and G constitute the peripheral sector of the complex.</text>
</comment>
<comment type="subcellular location">
    <subcellularLocation>
        <location evidence="1">Cell inner membrane</location>
        <topology evidence="1">Peripheral membrane protein</topology>
        <orientation evidence="1">Cytoplasmic side</orientation>
    </subcellularLocation>
</comment>
<comment type="similarity">
    <text evidence="1">Belongs to the complex I 30 kDa subunit family.</text>
</comment>